<name>BIOF_NITEU</name>
<keyword id="KW-0093">Biotin biosynthesis</keyword>
<keyword id="KW-0663">Pyridoxal phosphate</keyword>
<keyword id="KW-1185">Reference proteome</keyword>
<keyword id="KW-0808">Transferase</keyword>
<protein>
    <recommendedName>
        <fullName evidence="1">8-amino-7-oxononanoate synthase</fullName>
        <shortName evidence="1">AONS</shortName>
        <ecNumber evidence="1">2.3.1.47</ecNumber>
    </recommendedName>
    <alternativeName>
        <fullName evidence="1">7-keto-8-amino-pelargonic acid synthase</fullName>
        <shortName evidence="1">7-KAP synthase</shortName>
        <shortName evidence="1">KAPA synthase</shortName>
    </alternativeName>
    <alternativeName>
        <fullName evidence="1">8-amino-7-ketopelargonate synthase</fullName>
    </alternativeName>
</protein>
<accession>Q81ZZ4</accession>
<gene>
    <name evidence="1" type="primary">bioF</name>
    <name type="ordered locus">NE2299</name>
</gene>
<sequence>MLADLSEALRERQQEGLYRSRPVLEGPQSPHVTIDGRDFLAFCSNDYLGLANHPALIEAAAEGARCYGVGSGASHLISGHFRAHHELEEALAAFVGLPRTLLFSTGYMANMAVVTALAGRGDAIFADRLNHASLNDAALLSRARFIRYPHLDLDTLARQLETTKARRRLVVTDAVFSMDGDMAPVAELLTLCQRFDAWLLLDDAHGFGVLGERGKGSLYHSQRIERDTPYLIYMATLGKAAGVSGAFVAAQAPVVETLIQHGRTYGYTTAAPPLLAHTLLTSLQLISQESWRRERLALLIERLRQRLHSLPWPLLLSETPIQPLLVGESQEAVRLDLALRERGIWVPAIRPPTVPQGMARLRISLSAVHTEADVDRLGAALRDLAQC</sequence>
<proteinExistence type="inferred from homology"/>
<dbReference type="EC" id="2.3.1.47" evidence="1"/>
<dbReference type="EMBL" id="AL954747">
    <property type="protein sequence ID" value="CAD86211.1"/>
    <property type="molecule type" value="Genomic_DNA"/>
</dbReference>
<dbReference type="RefSeq" id="WP_011112783.1">
    <property type="nucleotide sequence ID" value="NC_004757.1"/>
</dbReference>
<dbReference type="SMR" id="Q81ZZ4"/>
<dbReference type="STRING" id="228410.NE2299"/>
<dbReference type="GeneID" id="87105430"/>
<dbReference type="KEGG" id="neu:NE2299"/>
<dbReference type="eggNOG" id="COG0156">
    <property type="taxonomic scope" value="Bacteria"/>
</dbReference>
<dbReference type="HOGENOM" id="CLU_015846_11_2_4"/>
<dbReference type="OrthoDB" id="9807157at2"/>
<dbReference type="PhylomeDB" id="Q81ZZ4"/>
<dbReference type="UniPathway" id="UPA00078"/>
<dbReference type="Proteomes" id="UP000001416">
    <property type="component" value="Chromosome"/>
</dbReference>
<dbReference type="GO" id="GO:0008710">
    <property type="term" value="F:8-amino-7-oxononanoate synthase activity"/>
    <property type="evidence" value="ECO:0007669"/>
    <property type="project" value="UniProtKB-UniRule"/>
</dbReference>
<dbReference type="GO" id="GO:0030170">
    <property type="term" value="F:pyridoxal phosphate binding"/>
    <property type="evidence" value="ECO:0007669"/>
    <property type="project" value="UniProtKB-UniRule"/>
</dbReference>
<dbReference type="GO" id="GO:0009102">
    <property type="term" value="P:biotin biosynthetic process"/>
    <property type="evidence" value="ECO:0007669"/>
    <property type="project" value="UniProtKB-UniRule"/>
</dbReference>
<dbReference type="CDD" id="cd06454">
    <property type="entry name" value="KBL_like"/>
    <property type="match status" value="1"/>
</dbReference>
<dbReference type="Gene3D" id="3.90.1150.10">
    <property type="entry name" value="Aspartate Aminotransferase, domain 1"/>
    <property type="match status" value="1"/>
</dbReference>
<dbReference type="Gene3D" id="3.40.640.10">
    <property type="entry name" value="Type I PLP-dependent aspartate aminotransferase-like (Major domain)"/>
    <property type="match status" value="1"/>
</dbReference>
<dbReference type="HAMAP" id="MF_01693">
    <property type="entry name" value="BioF_aminotrans_2"/>
    <property type="match status" value="1"/>
</dbReference>
<dbReference type="InterPro" id="IPR004839">
    <property type="entry name" value="Aminotransferase_I/II_large"/>
</dbReference>
<dbReference type="InterPro" id="IPR050087">
    <property type="entry name" value="AON_synthase_class-II"/>
</dbReference>
<dbReference type="InterPro" id="IPR004723">
    <property type="entry name" value="AONS_Archaea/Proteobacteria"/>
</dbReference>
<dbReference type="InterPro" id="IPR022834">
    <property type="entry name" value="AONS_Proteobacteria"/>
</dbReference>
<dbReference type="InterPro" id="IPR015424">
    <property type="entry name" value="PyrdxlP-dep_Trfase"/>
</dbReference>
<dbReference type="InterPro" id="IPR015421">
    <property type="entry name" value="PyrdxlP-dep_Trfase_major"/>
</dbReference>
<dbReference type="InterPro" id="IPR015422">
    <property type="entry name" value="PyrdxlP-dep_Trfase_small"/>
</dbReference>
<dbReference type="NCBIfam" id="TIGR00858">
    <property type="entry name" value="bioF"/>
    <property type="match status" value="1"/>
</dbReference>
<dbReference type="PANTHER" id="PTHR13693:SF100">
    <property type="entry name" value="8-AMINO-7-OXONONANOATE SYNTHASE"/>
    <property type="match status" value="1"/>
</dbReference>
<dbReference type="PANTHER" id="PTHR13693">
    <property type="entry name" value="CLASS II AMINOTRANSFERASE/8-AMINO-7-OXONONANOATE SYNTHASE"/>
    <property type="match status" value="1"/>
</dbReference>
<dbReference type="Pfam" id="PF00155">
    <property type="entry name" value="Aminotran_1_2"/>
    <property type="match status" value="1"/>
</dbReference>
<dbReference type="SUPFAM" id="SSF53383">
    <property type="entry name" value="PLP-dependent transferases"/>
    <property type="match status" value="1"/>
</dbReference>
<organism>
    <name type="scientific">Nitrosomonas europaea (strain ATCC 19718 / CIP 103999 / KCTC 2705 / NBRC 14298)</name>
    <dbReference type="NCBI Taxonomy" id="228410"/>
    <lineage>
        <taxon>Bacteria</taxon>
        <taxon>Pseudomonadati</taxon>
        <taxon>Pseudomonadota</taxon>
        <taxon>Betaproteobacteria</taxon>
        <taxon>Nitrosomonadales</taxon>
        <taxon>Nitrosomonadaceae</taxon>
        <taxon>Nitrosomonas</taxon>
    </lineage>
</organism>
<evidence type="ECO:0000255" key="1">
    <source>
        <dbReference type="HAMAP-Rule" id="MF_01693"/>
    </source>
</evidence>
<feature type="chain" id="PRO_0000381055" description="8-amino-7-oxononanoate synthase">
    <location>
        <begin position="1"/>
        <end position="387"/>
    </location>
</feature>
<feature type="binding site" evidence="1">
    <location>
        <position position="19"/>
    </location>
    <ligand>
        <name>substrate</name>
    </ligand>
</feature>
<feature type="binding site" evidence="1">
    <location>
        <begin position="106"/>
        <end position="107"/>
    </location>
    <ligand>
        <name>pyridoxal 5'-phosphate</name>
        <dbReference type="ChEBI" id="CHEBI:597326"/>
    </ligand>
</feature>
<feature type="binding site" evidence="1">
    <location>
        <position position="131"/>
    </location>
    <ligand>
        <name>substrate</name>
    </ligand>
</feature>
<feature type="binding site" evidence="1">
    <location>
        <position position="177"/>
    </location>
    <ligand>
        <name>pyridoxal 5'-phosphate</name>
        <dbReference type="ChEBI" id="CHEBI:597326"/>
    </ligand>
</feature>
<feature type="binding site" evidence="1">
    <location>
        <position position="205"/>
    </location>
    <ligand>
        <name>pyridoxal 5'-phosphate</name>
        <dbReference type="ChEBI" id="CHEBI:597326"/>
    </ligand>
</feature>
<feature type="binding site" evidence="1">
    <location>
        <position position="236"/>
    </location>
    <ligand>
        <name>pyridoxal 5'-phosphate</name>
        <dbReference type="ChEBI" id="CHEBI:597326"/>
    </ligand>
</feature>
<feature type="binding site" evidence="1">
    <location>
        <position position="353"/>
    </location>
    <ligand>
        <name>substrate</name>
    </ligand>
</feature>
<feature type="modified residue" description="N6-(pyridoxal phosphate)lysine" evidence="1">
    <location>
        <position position="239"/>
    </location>
</feature>
<comment type="function">
    <text evidence="1">Catalyzes the decarboxylative condensation of pimeloyl-[acyl-carrier protein] and L-alanine to produce 8-amino-7-oxononanoate (AON), [acyl-carrier protein], and carbon dioxide.</text>
</comment>
<comment type="catalytic activity">
    <reaction evidence="1">
        <text>6-carboxyhexanoyl-[ACP] + L-alanine + H(+) = (8S)-8-amino-7-oxononanoate + holo-[ACP] + CO2</text>
        <dbReference type="Rhea" id="RHEA:42288"/>
        <dbReference type="Rhea" id="RHEA-COMP:9685"/>
        <dbReference type="Rhea" id="RHEA-COMP:9955"/>
        <dbReference type="ChEBI" id="CHEBI:15378"/>
        <dbReference type="ChEBI" id="CHEBI:16526"/>
        <dbReference type="ChEBI" id="CHEBI:57972"/>
        <dbReference type="ChEBI" id="CHEBI:64479"/>
        <dbReference type="ChEBI" id="CHEBI:78846"/>
        <dbReference type="ChEBI" id="CHEBI:149468"/>
        <dbReference type="EC" id="2.3.1.47"/>
    </reaction>
</comment>
<comment type="cofactor">
    <cofactor evidence="1">
        <name>pyridoxal 5'-phosphate</name>
        <dbReference type="ChEBI" id="CHEBI:597326"/>
    </cofactor>
</comment>
<comment type="pathway">
    <text evidence="1">Cofactor biosynthesis; biotin biosynthesis.</text>
</comment>
<comment type="subunit">
    <text evidence="1">Homodimer.</text>
</comment>
<comment type="similarity">
    <text evidence="1">Belongs to the class-II pyridoxal-phosphate-dependent aminotransferase family. BioF subfamily.</text>
</comment>
<reference key="1">
    <citation type="journal article" date="2003" name="J. Bacteriol.">
        <title>Complete genome sequence of the ammonia-oxidizing bacterium and obligate chemolithoautotroph Nitrosomonas europaea.</title>
        <authorList>
            <person name="Chain P."/>
            <person name="Lamerdin J.E."/>
            <person name="Larimer F.W."/>
            <person name="Regala W."/>
            <person name="Lao V."/>
            <person name="Land M.L."/>
            <person name="Hauser L."/>
            <person name="Hooper A.B."/>
            <person name="Klotz M.G."/>
            <person name="Norton J."/>
            <person name="Sayavedra-Soto L.A."/>
            <person name="Arciero D.M."/>
            <person name="Hommes N.G."/>
            <person name="Whittaker M.M."/>
            <person name="Arp D.J."/>
        </authorList>
    </citation>
    <scope>NUCLEOTIDE SEQUENCE [LARGE SCALE GENOMIC DNA]</scope>
    <source>
        <strain>ATCC 19718 / CIP 103999 / KCTC 2705 / NBRC 14298</strain>
    </source>
</reference>